<feature type="chain" id="PRO_0000430138" description="Beta-D-glucosyl crocetin beta-1,6-glucosyltransferase">
    <location>
        <begin position="1"/>
        <end position="444"/>
    </location>
</feature>
<feature type="active site" description="Proton acceptor" evidence="1">
    <location>
        <position position="9"/>
    </location>
</feature>
<feature type="active site" description="Charge relay" evidence="1">
    <location>
        <position position="108"/>
    </location>
</feature>
<feature type="binding site" evidence="2">
    <location>
        <position position="9"/>
    </location>
    <ligand>
        <name>an anthocyanidin</name>
        <dbReference type="ChEBI" id="CHEBI:143576"/>
    </ligand>
</feature>
<feature type="binding site" evidence="1">
    <location>
        <position position="130"/>
    </location>
    <ligand>
        <name>UDP-alpha-D-glucose</name>
        <dbReference type="ChEBI" id="CHEBI:58885"/>
    </ligand>
</feature>
<feature type="binding site" evidence="1">
    <location>
        <position position="319"/>
    </location>
    <ligand>
        <name>UDP-alpha-D-glucose</name>
        <dbReference type="ChEBI" id="CHEBI:58885"/>
    </ligand>
</feature>
<feature type="binding site" evidence="1">
    <location>
        <position position="321"/>
    </location>
    <ligand>
        <name>UDP-alpha-D-glucose</name>
        <dbReference type="ChEBI" id="CHEBI:58885"/>
    </ligand>
</feature>
<feature type="binding site" evidence="1">
    <location>
        <position position="336"/>
    </location>
    <ligand>
        <name>UDP-alpha-D-glucose</name>
        <dbReference type="ChEBI" id="CHEBI:58885"/>
    </ligand>
</feature>
<feature type="binding site" evidence="1">
    <location>
        <position position="339"/>
    </location>
    <ligand>
        <name>UDP-alpha-D-glucose</name>
        <dbReference type="ChEBI" id="CHEBI:58885"/>
    </ligand>
</feature>
<feature type="binding site" evidence="1">
    <location>
        <position position="340"/>
    </location>
    <ligand>
        <name>UDP-alpha-D-glucose</name>
        <dbReference type="ChEBI" id="CHEBI:58885"/>
    </ligand>
</feature>
<feature type="binding site" evidence="1">
    <location>
        <position position="341"/>
    </location>
    <ligand>
        <name>UDP-alpha-D-glucose</name>
        <dbReference type="ChEBI" id="CHEBI:58885"/>
    </ligand>
</feature>
<feature type="binding site" evidence="1">
    <location>
        <position position="344"/>
    </location>
    <ligand>
        <name>UDP-alpha-D-glucose</name>
        <dbReference type="ChEBI" id="CHEBI:58885"/>
    </ligand>
</feature>
<feature type="binding site" evidence="1">
    <location>
        <position position="360"/>
    </location>
    <ligand>
        <name>UDP-alpha-D-glucose</name>
        <dbReference type="ChEBI" id="CHEBI:58885"/>
    </ligand>
</feature>
<feature type="binding site" evidence="1">
    <location>
        <position position="361"/>
    </location>
    <ligand>
        <name>UDP-alpha-D-glucose</name>
        <dbReference type="ChEBI" id="CHEBI:58885"/>
    </ligand>
</feature>
<protein>
    <recommendedName>
        <fullName>Beta-D-glucosyl crocetin beta-1,6-glucosyltransferase</fullName>
        <ecNumber evidence="3">2.4.1.330</ecNumber>
    </recommendedName>
    <alternativeName>
        <fullName>UDP-glucose glucosyltransferase 9</fullName>
        <shortName>GjUGT9</shortName>
    </alternativeName>
    <alternativeName>
        <fullName>UDP-glycosyltransferase 94E5</fullName>
    </alternativeName>
</protein>
<gene>
    <name type="primary">UGT94E5</name>
    <name type="synonym">UGT9</name>
</gene>
<reference key="1">
    <citation type="journal article" date="2011" name="J. Biol. Chem.">
        <title>Iridoid-specific Glucosyltransferase from Gardenia jasminoides.</title>
        <authorList>
            <person name="Nagatoshi M."/>
            <person name="Terasaka K."/>
            <person name="Nagatsu A."/>
            <person name="Mizukami H."/>
        </authorList>
    </citation>
    <scope>NUCLEOTIDE SEQUENCE [MRNA]</scope>
</reference>
<reference key="2">
    <citation type="journal article" date="2012" name="FEBS Lett.">
        <title>UGT75L6 and UGT94E5 mediate sequential glucosylation of crocetin to crocin in Gardenia jasminoides.</title>
        <authorList>
            <person name="Nagatoshi M."/>
            <person name="Terasaka K."/>
            <person name="Owaki M."/>
            <person name="Sota M."/>
            <person name="Inukai T."/>
            <person name="Nagatsu A."/>
            <person name="Mizukami H."/>
        </authorList>
    </citation>
    <scope>FUNCTION</scope>
    <scope>CATALYTIC ACTIVITY</scope>
    <scope>BIOPHYSICOCHEMICAL PROPERTIES</scope>
    <scope>TISSUE SPECIFICITY</scope>
</reference>
<evidence type="ECO:0000250" key="1">
    <source>
        <dbReference type="UniProtKB" id="A0A0A1HA03"/>
    </source>
</evidence>
<evidence type="ECO:0000250" key="2">
    <source>
        <dbReference type="UniProtKB" id="P51094"/>
    </source>
</evidence>
<evidence type="ECO:0000269" key="3">
    <source>
    </source>
</evidence>
<evidence type="ECO:0000305" key="4"/>
<evidence type="ECO:0000305" key="5">
    <source>
    </source>
</evidence>
<keyword id="KW-0328">Glycosyltransferase</keyword>
<keyword id="KW-0808">Transferase</keyword>
<proteinExistence type="evidence at protein level"/>
<comment type="function">
    <text evidence="3">Glucosyltransferase catalyzing the beta 1-6 glucosylation of the sugar moiety of crocetin glucosyl esters to produce crocetin gentiobiosyl esters. Weak activity toward curcumin glucosides, but no activity with flavonoid glucosides, coumarin glucosides, 4-nitrophenyl glucoside or crocetin. Involved with UGT75L6 in sequential glycosylation of crocetin to crocin (bis(beta-D-gentiobiosyl) crocetin).</text>
</comment>
<comment type="catalytic activity">
    <reaction evidence="3">
        <text>beta-D-glucosyl crocetin + UDP-alpha-D-glucose = beta-D-gentiobiosyl crocetin + UDP + H(+)</text>
        <dbReference type="Rhea" id="RHEA:42388"/>
        <dbReference type="ChEBI" id="CHEBI:15378"/>
        <dbReference type="ChEBI" id="CHEBI:58223"/>
        <dbReference type="ChEBI" id="CHEBI:58885"/>
        <dbReference type="ChEBI" id="CHEBI:62766"/>
        <dbReference type="ChEBI" id="CHEBI:62770"/>
        <dbReference type="EC" id="2.4.1.330"/>
    </reaction>
</comment>
<comment type="catalytic activity">
    <reaction evidence="3">
        <text>bis(beta-D-glucosyl) crocetin + UDP-alpha-D-glucose = beta-D-gentiobiosyl beta-D-glucosyl crocetin + UDP + H(+)</text>
        <dbReference type="Rhea" id="RHEA:30899"/>
        <dbReference type="ChEBI" id="CHEBI:15378"/>
        <dbReference type="ChEBI" id="CHEBI:58223"/>
        <dbReference type="ChEBI" id="CHEBI:58885"/>
        <dbReference type="ChEBI" id="CHEBI:62768"/>
        <dbReference type="ChEBI" id="CHEBI:62771"/>
        <dbReference type="EC" id="2.4.1.330"/>
    </reaction>
</comment>
<comment type="catalytic activity">
    <reaction evidence="3">
        <text>beta-D-gentiobiosyl beta-D-glucosyl crocetin + UDP-alpha-D-glucose = bis(beta-D-gentiobiosyl) crocetin + UDP + H(+)</text>
        <dbReference type="Rhea" id="RHEA:38859"/>
        <dbReference type="ChEBI" id="CHEBI:15378"/>
        <dbReference type="ChEBI" id="CHEBI:58223"/>
        <dbReference type="ChEBI" id="CHEBI:58885"/>
        <dbReference type="ChEBI" id="CHEBI:62771"/>
        <dbReference type="ChEBI" id="CHEBI:79068"/>
        <dbReference type="EC" id="2.4.1.330"/>
    </reaction>
</comment>
<comment type="biophysicochemical properties">
    <kinetics>
        <KM evidence="3">0.072 mM for beta-D-glucosyl crocetin</KM>
        <KM evidence="3">0.023 mM for bis(beta-D-glucosyl) crocetin</KM>
        <text>kcat is 0.036 sec(-1) for beta-D-glucosyl crocetin. kcat is 0.071 sec(-1) for bis(beta-D-glucosyl) crocetin.</text>
    </kinetics>
</comment>
<comment type="tissue specificity">
    <text evidence="3">Ubiquitous.</text>
</comment>
<comment type="miscellaneous">
    <text evidence="5">Crocin is a yellow pigment that accumulates during fruit development. No other crocetin glucosyl esters detected in neither flowers, leaves, nor stems. No correlation between mRNA expression and pigment accumulation (PubMed:22569263).</text>
</comment>
<comment type="similarity">
    <text evidence="4">Belongs to the UDP-glycosyltransferase family.</text>
</comment>
<dbReference type="EC" id="2.4.1.330" evidence="3"/>
<dbReference type="EMBL" id="AB555739">
    <property type="protein sequence ID" value="BAK55744.1"/>
    <property type="molecule type" value="mRNA"/>
</dbReference>
<dbReference type="SMR" id="F8WKW8"/>
<dbReference type="CAZy" id="GT1">
    <property type="family name" value="Glycosyltransferase Family 1"/>
</dbReference>
<dbReference type="KEGG" id="ag:BAK55744"/>
<dbReference type="BioCyc" id="MetaCyc:MONOMER-18780"/>
<dbReference type="BRENDA" id="2.4.1.330">
    <property type="organism ID" value="2400"/>
</dbReference>
<dbReference type="GO" id="GO:0008194">
    <property type="term" value="F:UDP-glycosyltransferase activity"/>
    <property type="evidence" value="ECO:0007669"/>
    <property type="project" value="InterPro"/>
</dbReference>
<dbReference type="GO" id="GO:1901137">
    <property type="term" value="P:carbohydrate derivative biosynthetic process"/>
    <property type="evidence" value="ECO:0007669"/>
    <property type="project" value="UniProtKB-ARBA"/>
</dbReference>
<dbReference type="CDD" id="cd03784">
    <property type="entry name" value="GT1_Gtf-like"/>
    <property type="match status" value="1"/>
</dbReference>
<dbReference type="FunFam" id="3.40.50.2000:FF:000060">
    <property type="entry name" value="Glycosyltransferase"/>
    <property type="match status" value="1"/>
</dbReference>
<dbReference type="Gene3D" id="3.40.50.2000">
    <property type="entry name" value="Glycogen Phosphorylase B"/>
    <property type="match status" value="2"/>
</dbReference>
<dbReference type="InterPro" id="IPR002213">
    <property type="entry name" value="UDP_glucos_trans"/>
</dbReference>
<dbReference type="InterPro" id="IPR035595">
    <property type="entry name" value="UDP_glycos_trans_CS"/>
</dbReference>
<dbReference type="PANTHER" id="PTHR48044">
    <property type="entry name" value="GLYCOSYLTRANSFERASE"/>
    <property type="match status" value="1"/>
</dbReference>
<dbReference type="PANTHER" id="PTHR48044:SF14">
    <property type="entry name" value="GLYCOSYLTRANSFERASE"/>
    <property type="match status" value="1"/>
</dbReference>
<dbReference type="Pfam" id="PF00201">
    <property type="entry name" value="UDPGT"/>
    <property type="match status" value="1"/>
</dbReference>
<dbReference type="SUPFAM" id="SSF53756">
    <property type="entry name" value="UDP-Glycosyltransferase/glycogen phosphorylase"/>
    <property type="match status" value="1"/>
</dbReference>
<dbReference type="PROSITE" id="PS00375">
    <property type="entry name" value="UDPGT"/>
    <property type="match status" value="1"/>
</dbReference>
<sequence>MFPWLAYGHISPYLELAKRLTDRGFAIYICSTPINLGFIKKRITGKYSVTIKLVELHLPDTPELPPHYHTTNGLPPHLMATLKRALNGAKPELSNILKTLKPDFVIYDATQTWTAALTVAHNIPAVKFLTSSVSMLAYFCHLFMKPGIEFPFPAIYLSDFEQAKARTAAQDARADAEENDPAAERPNRDCDSIFLVKSSRAIEGKYIDYLFDLMKLKMLPVGMLVEEPVKDDQGDNSNELIQWLGTKSQRSTVLVSFGTEYFLTKEEMEEIAHGLELSEVNFIWVVRFAMGQKIRPDEALPEGFLERVGDRGRIVEGWAPQSEVLAHPSTGGFICHCGWNSVVESIEFGVPVIAMPMHLDQPLNARLVVEIGAGMEVVRDETGKFDRKEIARAIKDAMVEKTGENTRAKMLDVKGRVELKEKQELDEVAELLTQLVTETTQSSN</sequence>
<accession>F8WKW8</accession>
<name>UGT9_GARJA</name>
<organism>
    <name type="scientific">Gardenia jasminoides</name>
    <name type="common">Cape jasmine</name>
    <name type="synonym">Gardenia augusta</name>
    <dbReference type="NCBI Taxonomy" id="114476"/>
    <lineage>
        <taxon>Eukaryota</taxon>
        <taxon>Viridiplantae</taxon>
        <taxon>Streptophyta</taxon>
        <taxon>Embryophyta</taxon>
        <taxon>Tracheophyta</taxon>
        <taxon>Spermatophyta</taxon>
        <taxon>Magnoliopsida</taxon>
        <taxon>eudicotyledons</taxon>
        <taxon>Gunneridae</taxon>
        <taxon>Pentapetalae</taxon>
        <taxon>asterids</taxon>
        <taxon>lamiids</taxon>
        <taxon>Gentianales</taxon>
        <taxon>Rubiaceae</taxon>
        <taxon>Ixoroideae</taxon>
        <taxon>Gardenieae complex</taxon>
        <taxon>Gardenieae - Pavetteae clade</taxon>
        <taxon>Gardenieae</taxon>
        <taxon>Gardenia</taxon>
    </lineage>
</organism>